<feature type="chain" id="PRO_0000267946" description="Large ribosomal subunit protein bL17">
    <location>
        <begin position="1"/>
        <end position="127"/>
    </location>
</feature>
<sequence length="127" mass="14365">MRHRKSGRQLNRNSSHRQAMFRNMAGSLVRHEIIKTTLPKAKELRRVVEPLITLAKTDSVANRRLAFARTRDNEIVAKLFNELGPRFASRAGGYTRILKCGFRAGDNAPMAYIELVDRSEKAEAAAE</sequence>
<accession>Q32B57</accession>
<reference key="1">
    <citation type="journal article" date="2005" name="Nucleic Acids Res.">
        <title>Genome dynamics and diversity of Shigella species, the etiologic agents of bacillary dysentery.</title>
        <authorList>
            <person name="Yang F."/>
            <person name="Yang J."/>
            <person name="Zhang X."/>
            <person name="Chen L."/>
            <person name="Jiang Y."/>
            <person name="Yan Y."/>
            <person name="Tang X."/>
            <person name="Wang J."/>
            <person name="Xiong Z."/>
            <person name="Dong J."/>
            <person name="Xue Y."/>
            <person name="Zhu Y."/>
            <person name="Xu X."/>
            <person name="Sun L."/>
            <person name="Chen S."/>
            <person name="Nie H."/>
            <person name="Peng J."/>
            <person name="Xu J."/>
            <person name="Wang Y."/>
            <person name="Yuan Z."/>
            <person name="Wen Y."/>
            <person name="Yao Z."/>
            <person name="Shen Y."/>
            <person name="Qiang B."/>
            <person name="Hou Y."/>
            <person name="Yu J."/>
            <person name="Jin Q."/>
        </authorList>
    </citation>
    <scope>NUCLEOTIDE SEQUENCE [LARGE SCALE GENOMIC DNA]</scope>
    <source>
        <strain>Sd197</strain>
    </source>
</reference>
<keyword id="KW-1185">Reference proteome</keyword>
<keyword id="KW-0687">Ribonucleoprotein</keyword>
<keyword id="KW-0689">Ribosomal protein</keyword>
<gene>
    <name evidence="1" type="primary">rplQ</name>
    <name type="ordered locus">SDY_3470</name>
</gene>
<name>RL17_SHIDS</name>
<evidence type="ECO:0000255" key="1">
    <source>
        <dbReference type="HAMAP-Rule" id="MF_01368"/>
    </source>
</evidence>
<evidence type="ECO:0000305" key="2"/>
<comment type="subunit">
    <text evidence="1">Part of the 50S ribosomal subunit. Contacts protein L32.</text>
</comment>
<comment type="similarity">
    <text evidence="1">Belongs to the bacterial ribosomal protein bL17 family.</text>
</comment>
<organism>
    <name type="scientific">Shigella dysenteriae serotype 1 (strain Sd197)</name>
    <dbReference type="NCBI Taxonomy" id="300267"/>
    <lineage>
        <taxon>Bacteria</taxon>
        <taxon>Pseudomonadati</taxon>
        <taxon>Pseudomonadota</taxon>
        <taxon>Gammaproteobacteria</taxon>
        <taxon>Enterobacterales</taxon>
        <taxon>Enterobacteriaceae</taxon>
        <taxon>Shigella</taxon>
    </lineage>
</organism>
<dbReference type="EMBL" id="CP000034">
    <property type="protein sequence ID" value="ABB63448.1"/>
    <property type="molecule type" value="Genomic_DNA"/>
</dbReference>
<dbReference type="RefSeq" id="WP_001216368.1">
    <property type="nucleotide sequence ID" value="NC_007606.1"/>
</dbReference>
<dbReference type="RefSeq" id="YP_404939.1">
    <property type="nucleotide sequence ID" value="NC_007606.1"/>
</dbReference>
<dbReference type="SMR" id="Q32B57"/>
<dbReference type="STRING" id="300267.SDY_3470"/>
<dbReference type="EnsemblBacteria" id="ABB63448">
    <property type="protein sequence ID" value="ABB63448"/>
    <property type="gene ID" value="SDY_3470"/>
</dbReference>
<dbReference type="GeneID" id="97442834"/>
<dbReference type="KEGG" id="sdy:SDY_3470"/>
<dbReference type="PATRIC" id="fig|300267.13.peg.4123"/>
<dbReference type="HOGENOM" id="CLU_074407_2_0_6"/>
<dbReference type="Proteomes" id="UP000002716">
    <property type="component" value="Chromosome"/>
</dbReference>
<dbReference type="GO" id="GO:0022625">
    <property type="term" value="C:cytosolic large ribosomal subunit"/>
    <property type="evidence" value="ECO:0007669"/>
    <property type="project" value="TreeGrafter"/>
</dbReference>
<dbReference type="GO" id="GO:0003735">
    <property type="term" value="F:structural constituent of ribosome"/>
    <property type="evidence" value="ECO:0007669"/>
    <property type="project" value="InterPro"/>
</dbReference>
<dbReference type="GO" id="GO:0006412">
    <property type="term" value="P:translation"/>
    <property type="evidence" value="ECO:0007669"/>
    <property type="project" value="UniProtKB-UniRule"/>
</dbReference>
<dbReference type="FunFam" id="3.90.1030.10:FF:000001">
    <property type="entry name" value="50S ribosomal protein L17"/>
    <property type="match status" value="1"/>
</dbReference>
<dbReference type="Gene3D" id="3.90.1030.10">
    <property type="entry name" value="Ribosomal protein L17"/>
    <property type="match status" value="1"/>
</dbReference>
<dbReference type="HAMAP" id="MF_01368">
    <property type="entry name" value="Ribosomal_bL17"/>
    <property type="match status" value="1"/>
</dbReference>
<dbReference type="InterPro" id="IPR000456">
    <property type="entry name" value="Ribosomal_bL17"/>
</dbReference>
<dbReference type="InterPro" id="IPR047859">
    <property type="entry name" value="Ribosomal_bL17_CS"/>
</dbReference>
<dbReference type="InterPro" id="IPR036373">
    <property type="entry name" value="Ribosomal_bL17_sf"/>
</dbReference>
<dbReference type="NCBIfam" id="TIGR00059">
    <property type="entry name" value="L17"/>
    <property type="match status" value="1"/>
</dbReference>
<dbReference type="PANTHER" id="PTHR14413:SF16">
    <property type="entry name" value="LARGE RIBOSOMAL SUBUNIT PROTEIN BL17M"/>
    <property type="match status" value="1"/>
</dbReference>
<dbReference type="PANTHER" id="PTHR14413">
    <property type="entry name" value="RIBOSOMAL PROTEIN L17"/>
    <property type="match status" value="1"/>
</dbReference>
<dbReference type="Pfam" id="PF01196">
    <property type="entry name" value="Ribosomal_L17"/>
    <property type="match status" value="1"/>
</dbReference>
<dbReference type="SUPFAM" id="SSF64263">
    <property type="entry name" value="Prokaryotic ribosomal protein L17"/>
    <property type="match status" value="1"/>
</dbReference>
<dbReference type="PROSITE" id="PS01167">
    <property type="entry name" value="RIBOSOMAL_L17"/>
    <property type="match status" value="1"/>
</dbReference>
<protein>
    <recommendedName>
        <fullName evidence="1">Large ribosomal subunit protein bL17</fullName>
    </recommendedName>
    <alternativeName>
        <fullName evidence="2">50S ribosomal protein L17</fullName>
    </alternativeName>
</protein>
<proteinExistence type="inferred from homology"/>